<organism>
    <name type="scientific">Streptococcus pyogenes serotype M28 (strain MGAS6180)</name>
    <dbReference type="NCBI Taxonomy" id="319701"/>
    <lineage>
        <taxon>Bacteria</taxon>
        <taxon>Bacillati</taxon>
        <taxon>Bacillota</taxon>
        <taxon>Bacilli</taxon>
        <taxon>Lactobacillales</taxon>
        <taxon>Streptococcaceae</taxon>
        <taxon>Streptococcus</taxon>
    </lineage>
</organism>
<protein>
    <recommendedName>
        <fullName evidence="1">Xaa-Pro dipeptidyl-peptidase</fullName>
        <ecNumber evidence="1">3.4.14.11</ecNumber>
    </recommendedName>
    <alternativeName>
        <fullName evidence="1">X-Pro dipeptidyl-peptidase</fullName>
    </alternativeName>
    <alternativeName>
        <fullName evidence="1">X-prolyl-dipeptidyl aminopeptidase</fullName>
        <shortName evidence="1">X-PDAP</shortName>
    </alternativeName>
</protein>
<feature type="chain" id="PRO_1000045493" description="Xaa-Pro dipeptidyl-peptidase">
    <location>
        <begin position="1"/>
        <end position="760"/>
    </location>
</feature>
<feature type="active site" description="Charge relay system" evidence="1">
    <location>
        <position position="349"/>
    </location>
</feature>
<feature type="active site" description="Charge relay system" evidence="1">
    <location>
        <position position="469"/>
    </location>
</feature>
<feature type="active site" description="Charge relay system" evidence="1">
    <location>
        <position position="499"/>
    </location>
</feature>
<dbReference type="EC" id="3.4.14.11" evidence="1"/>
<dbReference type="EMBL" id="CP000056">
    <property type="protein sequence ID" value="AAX72675.1"/>
    <property type="molecule type" value="Genomic_DNA"/>
</dbReference>
<dbReference type="RefSeq" id="WP_011285139.1">
    <property type="nucleotide sequence ID" value="NC_007296.2"/>
</dbReference>
<dbReference type="SMR" id="Q48RI5"/>
<dbReference type="ESTHER" id="strpy-PEPXP">
    <property type="family name" value="Lactobacillus_peptidase"/>
</dbReference>
<dbReference type="KEGG" id="spb:M28_Spy1565"/>
<dbReference type="HOGENOM" id="CLU_011800_0_0_9"/>
<dbReference type="GO" id="GO:0005737">
    <property type="term" value="C:cytoplasm"/>
    <property type="evidence" value="ECO:0007669"/>
    <property type="project" value="UniProtKB-SubCell"/>
</dbReference>
<dbReference type="GO" id="GO:0004177">
    <property type="term" value="F:aminopeptidase activity"/>
    <property type="evidence" value="ECO:0007669"/>
    <property type="project" value="UniProtKB-KW"/>
</dbReference>
<dbReference type="GO" id="GO:0008239">
    <property type="term" value="F:dipeptidyl-peptidase activity"/>
    <property type="evidence" value="ECO:0007669"/>
    <property type="project" value="UniProtKB-UniRule"/>
</dbReference>
<dbReference type="GO" id="GO:0008236">
    <property type="term" value="F:serine-type peptidase activity"/>
    <property type="evidence" value="ECO:0007669"/>
    <property type="project" value="UniProtKB-KW"/>
</dbReference>
<dbReference type="GO" id="GO:0006508">
    <property type="term" value="P:proteolysis"/>
    <property type="evidence" value="ECO:0007669"/>
    <property type="project" value="UniProtKB-KW"/>
</dbReference>
<dbReference type="Gene3D" id="1.10.246.70">
    <property type="match status" value="1"/>
</dbReference>
<dbReference type="Gene3D" id="3.40.50.1820">
    <property type="entry name" value="alpha/beta hydrolase"/>
    <property type="match status" value="1"/>
</dbReference>
<dbReference type="Gene3D" id="2.60.120.260">
    <property type="entry name" value="Galactose-binding domain-like"/>
    <property type="match status" value="1"/>
</dbReference>
<dbReference type="HAMAP" id="MF_00698">
    <property type="entry name" value="Aminopeptidase_S15"/>
    <property type="match status" value="1"/>
</dbReference>
<dbReference type="InterPro" id="IPR029058">
    <property type="entry name" value="AB_hydrolase_fold"/>
</dbReference>
<dbReference type="InterPro" id="IPR008979">
    <property type="entry name" value="Galactose-bd-like_sf"/>
</dbReference>
<dbReference type="InterPro" id="IPR008252">
    <property type="entry name" value="Pept_S15_Xpro"/>
</dbReference>
<dbReference type="InterPro" id="IPR015251">
    <property type="entry name" value="PepX_N_dom"/>
</dbReference>
<dbReference type="InterPro" id="IPR036313">
    <property type="entry name" value="PepX_N_dom_sf"/>
</dbReference>
<dbReference type="InterPro" id="IPR000383">
    <property type="entry name" value="Xaa-Pro-like_dom"/>
</dbReference>
<dbReference type="InterPro" id="IPR013736">
    <property type="entry name" value="Xaa-Pro_dipept_C"/>
</dbReference>
<dbReference type="InterPro" id="IPR050585">
    <property type="entry name" value="Xaa-Pro_dipeptidyl-ppase/CocE"/>
</dbReference>
<dbReference type="NCBIfam" id="NF003783">
    <property type="entry name" value="PRK05371.1-4"/>
    <property type="match status" value="1"/>
</dbReference>
<dbReference type="PANTHER" id="PTHR43056:SF10">
    <property type="entry name" value="COCE_NOND FAMILY, PUTATIVE (AFU_ORTHOLOGUE AFUA_7G00600)-RELATED"/>
    <property type="match status" value="1"/>
</dbReference>
<dbReference type="PANTHER" id="PTHR43056">
    <property type="entry name" value="PEPTIDASE S9 PROLYL OLIGOPEPTIDASE"/>
    <property type="match status" value="1"/>
</dbReference>
<dbReference type="Pfam" id="PF02129">
    <property type="entry name" value="Peptidase_S15"/>
    <property type="match status" value="1"/>
</dbReference>
<dbReference type="Pfam" id="PF08530">
    <property type="entry name" value="PepX_C"/>
    <property type="match status" value="1"/>
</dbReference>
<dbReference type="Pfam" id="PF09168">
    <property type="entry name" value="PepX_N"/>
    <property type="match status" value="1"/>
</dbReference>
<dbReference type="PRINTS" id="PR00923">
    <property type="entry name" value="LACTOPTASE"/>
</dbReference>
<dbReference type="SMART" id="SM00939">
    <property type="entry name" value="PepX_C"/>
    <property type="match status" value="1"/>
</dbReference>
<dbReference type="SMART" id="SM00940">
    <property type="entry name" value="PepX_N"/>
    <property type="match status" value="1"/>
</dbReference>
<dbReference type="SUPFAM" id="SSF53474">
    <property type="entry name" value="alpha/beta-Hydrolases"/>
    <property type="match status" value="1"/>
</dbReference>
<dbReference type="SUPFAM" id="SSF49785">
    <property type="entry name" value="Galactose-binding domain-like"/>
    <property type="match status" value="1"/>
</dbReference>
<dbReference type="SUPFAM" id="SSF81761">
    <property type="entry name" value="X-Prolyl dipeptidyl aminopeptidase PepX, N-terminal domain"/>
    <property type="match status" value="1"/>
</dbReference>
<name>PEPX_STRPM</name>
<keyword id="KW-0031">Aminopeptidase</keyword>
<keyword id="KW-0963">Cytoplasm</keyword>
<keyword id="KW-0378">Hydrolase</keyword>
<keyword id="KW-0645">Protease</keyword>
<keyword id="KW-0720">Serine protease</keyword>
<gene>
    <name evidence="1" type="primary">pepX</name>
    <name type="ordered locus">M28_Spy1565</name>
</gene>
<reference key="1">
    <citation type="journal article" date="2005" name="J. Infect. Dis.">
        <title>Genome sequence of a serotype M28 strain of group A Streptococcus: potential new insights into puerperal sepsis and bacterial disease specificity.</title>
        <authorList>
            <person name="Green N.M."/>
            <person name="Zhang S."/>
            <person name="Porcella S.F."/>
            <person name="Nagiec M.J."/>
            <person name="Barbian K.D."/>
            <person name="Beres S.B."/>
            <person name="Lefebvre R.B."/>
            <person name="Musser J.M."/>
        </authorList>
    </citation>
    <scope>NUCLEOTIDE SEQUENCE [LARGE SCALE GENOMIC DNA]</scope>
    <source>
        <strain>MGAS6180</strain>
    </source>
</reference>
<accession>Q48RI5</accession>
<sequence>MRYNQFSYIPTSLERAAEELKELGFDLDLQKTAKANLESFLRKIFFHYPDSDYPLSHLIAKNDMDALSFFQSEQELSKEVFDLLALQVLGFIPGVDFTEADAFLDKLAFPIHFDETEIIKHIHHLLATRCKSGMTLIDDLVSQGMLTMDNDYHFFNGKSLATFDTSQLIREVVYVEAPLDTDQDGQFDLIKVNIIRPQSQKPLPTLMTPSPYHQGINEVANDKKLYRMEKELVVKKRRQITVEDRDFIPLETQPCKLPIGQNLESFSYINSYSLNDYFLARGFANIYVSGVGTAGSTGFMTSGDYAQIESFKAVIDWLNGRATAYTSHSKTHQVRADWANGLVCTTGKSYLGTMSTGLATTGVDGLAMIIAESAISSWYNYYRENGLVCSPGGYPGEDLDVLTELTYSRNLLAGDYLRHNDHYQELLNQQSQALDRQSGDYNQFWHDRNYLKNAHQIKCDVVYSHGLQDWNVKPRQVYEIFNALPSTINKHLFLHQGEHVYMHNWQSIDFRESMNALLCQKLLGLANDFSLPEMIWQDNTCPQNWQERKVFGTSTIKELDLGQELLLIDNHYGEDEFKAYGKDFRASKAALFKGKANQALIDILLEEDLPINGEIVLQLKVKSSENKGLLSAQILDYGKKKRLGDLPIALTQSSIDNGQNFSREPLKELPFREDSYRVISKGFMNLQNRNNLSSIETIPNNKWMTVRLPLQPTIYHLEKGDTLRVILYTTDFEHTVRDNSNYALTIDLSQSQLIVPIASN</sequence>
<comment type="function">
    <text evidence="1">Removes N-terminal dipeptides sequentially from polypeptides having unsubstituted N-termini provided that the penultimate residue is proline.</text>
</comment>
<comment type="catalytic activity">
    <reaction evidence="1">
        <text>Hydrolyzes Xaa-Pro-|- bonds to release unblocked, N-terminal dipeptides from substrates including Ala-Pro-|-p-nitroanilide and (sequentially) Tyr-Pro-|-Phe-Pro-|-Gly-Pro-|-Ile.</text>
        <dbReference type="EC" id="3.4.14.11"/>
    </reaction>
</comment>
<comment type="subunit">
    <text evidence="1">Homodimer.</text>
</comment>
<comment type="subcellular location">
    <subcellularLocation>
        <location evidence="1">Cytoplasm</location>
    </subcellularLocation>
</comment>
<comment type="similarity">
    <text evidence="1">Belongs to the peptidase S15 family.</text>
</comment>
<proteinExistence type="inferred from homology"/>
<evidence type="ECO:0000255" key="1">
    <source>
        <dbReference type="HAMAP-Rule" id="MF_00698"/>
    </source>
</evidence>